<keyword id="KW-0021">Allosteric enzyme</keyword>
<keyword id="KW-0963">Cytoplasm</keyword>
<keyword id="KW-0378">Hydrolase</keyword>
<keyword id="KW-0479">Metal-binding</keyword>
<keyword id="KW-0645">Protease</keyword>
<keyword id="KW-1185">Reference proteome</keyword>
<keyword id="KW-0915">Sodium</keyword>
<keyword id="KW-0888">Threonine protease</keyword>
<name>HSLV_KORVE</name>
<accession>Q1IV81</accession>
<comment type="function">
    <text evidence="1">Protease subunit of a proteasome-like degradation complex believed to be a general protein degrading machinery.</text>
</comment>
<comment type="catalytic activity">
    <reaction evidence="1">
        <text>ATP-dependent cleavage of peptide bonds with broad specificity.</text>
        <dbReference type="EC" id="3.4.25.2"/>
    </reaction>
</comment>
<comment type="activity regulation">
    <text evidence="1">Allosterically activated by HslU binding.</text>
</comment>
<comment type="subunit">
    <text evidence="1">A double ring-shaped homohexamer of HslV is capped on each side by a ring-shaped HslU homohexamer. The assembly of the HslU/HslV complex is dependent on binding of ATP.</text>
</comment>
<comment type="subcellular location">
    <subcellularLocation>
        <location evidence="1">Cytoplasm</location>
    </subcellularLocation>
</comment>
<comment type="similarity">
    <text evidence="1">Belongs to the peptidase T1B family. HslV subfamily.</text>
</comment>
<organism>
    <name type="scientific">Koribacter versatilis (strain Ellin345)</name>
    <dbReference type="NCBI Taxonomy" id="204669"/>
    <lineage>
        <taxon>Bacteria</taxon>
        <taxon>Pseudomonadati</taxon>
        <taxon>Acidobacteriota</taxon>
        <taxon>Terriglobia</taxon>
        <taxon>Terriglobales</taxon>
        <taxon>Candidatus Korobacteraceae</taxon>
        <taxon>Candidatus Korobacter</taxon>
    </lineage>
</organism>
<proteinExistence type="inferred from homology"/>
<feature type="chain" id="PRO_0000336761" description="ATP-dependent protease subunit HslV">
    <location>
        <begin position="1"/>
        <end position="180"/>
    </location>
</feature>
<feature type="active site" evidence="1">
    <location>
        <position position="10"/>
    </location>
</feature>
<feature type="binding site" evidence="1">
    <location>
        <position position="165"/>
    </location>
    <ligand>
        <name>Na(+)</name>
        <dbReference type="ChEBI" id="CHEBI:29101"/>
    </ligand>
</feature>
<feature type="binding site" evidence="1">
    <location>
        <position position="168"/>
    </location>
    <ligand>
        <name>Na(+)</name>
        <dbReference type="ChEBI" id="CHEBI:29101"/>
    </ligand>
</feature>
<feature type="binding site" evidence="1">
    <location>
        <position position="171"/>
    </location>
    <ligand>
        <name>Na(+)</name>
        <dbReference type="ChEBI" id="CHEBI:29101"/>
    </ligand>
</feature>
<reference key="1">
    <citation type="journal article" date="2009" name="Appl. Environ. Microbiol.">
        <title>Three genomes from the phylum Acidobacteria provide insight into the lifestyles of these microorganisms in soils.</title>
        <authorList>
            <person name="Ward N.L."/>
            <person name="Challacombe J.F."/>
            <person name="Janssen P.H."/>
            <person name="Henrissat B."/>
            <person name="Coutinho P.M."/>
            <person name="Wu M."/>
            <person name="Xie G."/>
            <person name="Haft D.H."/>
            <person name="Sait M."/>
            <person name="Badger J."/>
            <person name="Barabote R.D."/>
            <person name="Bradley B."/>
            <person name="Brettin T.S."/>
            <person name="Brinkac L.M."/>
            <person name="Bruce D."/>
            <person name="Creasy T."/>
            <person name="Daugherty S.C."/>
            <person name="Davidsen T.M."/>
            <person name="DeBoy R.T."/>
            <person name="Detter J.C."/>
            <person name="Dodson R.J."/>
            <person name="Durkin A.S."/>
            <person name="Ganapathy A."/>
            <person name="Gwinn-Giglio M."/>
            <person name="Han C.S."/>
            <person name="Khouri H."/>
            <person name="Kiss H."/>
            <person name="Kothari S.P."/>
            <person name="Madupu R."/>
            <person name="Nelson K.E."/>
            <person name="Nelson W.C."/>
            <person name="Paulsen I."/>
            <person name="Penn K."/>
            <person name="Ren Q."/>
            <person name="Rosovitz M.J."/>
            <person name="Selengut J.D."/>
            <person name="Shrivastava S."/>
            <person name="Sullivan S.A."/>
            <person name="Tapia R."/>
            <person name="Thompson L.S."/>
            <person name="Watkins K.L."/>
            <person name="Yang Q."/>
            <person name="Yu C."/>
            <person name="Zafar N."/>
            <person name="Zhou L."/>
            <person name="Kuske C.R."/>
        </authorList>
    </citation>
    <scope>NUCLEOTIDE SEQUENCE [LARGE SCALE GENOMIC DNA]</scope>
    <source>
        <strain>Ellin345</strain>
    </source>
</reference>
<sequence>MSSKRLVRSTTVLCVRRDGKVVMAADGQVTLGEGVIKHNARKLRRLYQDKIIAGFAGSTADAFSLFGRFESKLEQYHGNLSRAAVELGKDWRTDKMLRQLEALLLVADKDQTFLISGQGDVIEPDTGIAAIGSGGSYATAAATALLEHSTLDARQIAEEAMKIAGKICIYTNDRVTIEEL</sequence>
<protein>
    <recommendedName>
        <fullName evidence="1">ATP-dependent protease subunit HslV</fullName>
        <ecNumber evidence="1">3.4.25.2</ecNumber>
    </recommendedName>
</protein>
<dbReference type="EC" id="3.4.25.2" evidence="1"/>
<dbReference type="EMBL" id="CP000360">
    <property type="protein sequence ID" value="ABF39219.1"/>
    <property type="molecule type" value="Genomic_DNA"/>
</dbReference>
<dbReference type="SMR" id="Q1IV81"/>
<dbReference type="STRING" id="204669.Acid345_0214"/>
<dbReference type="MEROPS" id="T01.006"/>
<dbReference type="EnsemblBacteria" id="ABF39219">
    <property type="protein sequence ID" value="ABF39219"/>
    <property type="gene ID" value="Acid345_0214"/>
</dbReference>
<dbReference type="KEGG" id="aba:Acid345_0214"/>
<dbReference type="eggNOG" id="COG5405">
    <property type="taxonomic scope" value="Bacteria"/>
</dbReference>
<dbReference type="HOGENOM" id="CLU_093872_1_0_0"/>
<dbReference type="OrthoDB" id="9804884at2"/>
<dbReference type="Proteomes" id="UP000002432">
    <property type="component" value="Chromosome"/>
</dbReference>
<dbReference type="GO" id="GO:0009376">
    <property type="term" value="C:HslUV protease complex"/>
    <property type="evidence" value="ECO:0007669"/>
    <property type="project" value="UniProtKB-UniRule"/>
</dbReference>
<dbReference type="GO" id="GO:0005839">
    <property type="term" value="C:proteasome core complex"/>
    <property type="evidence" value="ECO:0007669"/>
    <property type="project" value="InterPro"/>
</dbReference>
<dbReference type="GO" id="GO:0046872">
    <property type="term" value="F:metal ion binding"/>
    <property type="evidence" value="ECO:0007669"/>
    <property type="project" value="UniProtKB-KW"/>
</dbReference>
<dbReference type="GO" id="GO:0004298">
    <property type="term" value="F:threonine-type endopeptidase activity"/>
    <property type="evidence" value="ECO:0007669"/>
    <property type="project" value="UniProtKB-KW"/>
</dbReference>
<dbReference type="GO" id="GO:0051603">
    <property type="term" value="P:proteolysis involved in protein catabolic process"/>
    <property type="evidence" value="ECO:0007669"/>
    <property type="project" value="InterPro"/>
</dbReference>
<dbReference type="CDD" id="cd01913">
    <property type="entry name" value="protease_HslV"/>
    <property type="match status" value="1"/>
</dbReference>
<dbReference type="FunFam" id="3.60.20.10:FF:000002">
    <property type="entry name" value="ATP-dependent protease subunit HslV"/>
    <property type="match status" value="1"/>
</dbReference>
<dbReference type="Gene3D" id="3.60.20.10">
    <property type="entry name" value="Glutamine Phosphoribosylpyrophosphate, subunit 1, domain 1"/>
    <property type="match status" value="1"/>
</dbReference>
<dbReference type="HAMAP" id="MF_00248">
    <property type="entry name" value="HslV"/>
    <property type="match status" value="1"/>
</dbReference>
<dbReference type="InterPro" id="IPR022281">
    <property type="entry name" value="ATP-dep_Prtase_HsIV_su"/>
</dbReference>
<dbReference type="InterPro" id="IPR029055">
    <property type="entry name" value="Ntn_hydrolases_N"/>
</dbReference>
<dbReference type="InterPro" id="IPR001353">
    <property type="entry name" value="Proteasome_sua/b"/>
</dbReference>
<dbReference type="InterPro" id="IPR023333">
    <property type="entry name" value="Proteasome_suB-type"/>
</dbReference>
<dbReference type="NCBIfam" id="TIGR03692">
    <property type="entry name" value="ATP_dep_HslV"/>
    <property type="match status" value="1"/>
</dbReference>
<dbReference type="NCBIfam" id="NF003964">
    <property type="entry name" value="PRK05456.1"/>
    <property type="match status" value="1"/>
</dbReference>
<dbReference type="PANTHER" id="PTHR32194:SF0">
    <property type="entry name" value="ATP-DEPENDENT PROTEASE SUBUNIT HSLV"/>
    <property type="match status" value="1"/>
</dbReference>
<dbReference type="PANTHER" id="PTHR32194">
    <property type="entry name" value="METALLOPROTEASE TLDD"/>
    <property type="match status" value="1"/>
</dbReference>
<dbReference type="Pfam" id="PF00227">
    <property type="entry name" value="Proteasome"/>
    <property type="match status" value="1"/>
</dbReference>
<dbReference type="PIRSF" id="PIRSF039093">
    <property type="entry name" value="HslV"/>
    <property type="match status" value="1"/>
</dbReference>
<dbReference type="SUPFAM" id="SSF56235">
    <property type="entry name" value="N-terminal nucleophile aminohydrolases (Ntn hydrolases)"/>
    <property type="match status" value="1"/>
</dbReference>
<dbReference type="PROSITE" id="PS51476">
    <property type="entry name" value="PROTEASOME_BETA_2"/>
    <property type="match status" value="1"/>
</dbReference>
<evidence type="ECO:0000255" key="1">
    <source>
        <dbReference type="HAMAP-Rule" id="MF_00248"/>
    </source>
</evidence>
<gene>
    <name evidence="1" type="primary">hslV</name>
    <name type="ordered locus">Acid345_0214</name>
</gene>